<protein>
    <recommendedName>
        <fullName>Eukaryotic translation initiation factor 1A, Y-chromosomal</fullName>
        <shortName>eIF-1A Y isoform</shortName>
        <shortName>eIF1A Y isoform</shortName>
    </recommendedName>
    <alternativeName>
        <fullName>Eukaryotic translation initiation factor 4C</fullName>
        <shortName>eIF-4C</shortName>
    </alternativeName>
</protein>
<evidence type="ECO:0000250" key="1">
    <source>
        <dbReference type="UniProtKB" id="P47813"/>
    </source>
</evidence>
<evidence type="ECO:0000256" key="2">
    <source>
        <dbReference type="SAM" id="MobiDB-lite"/>
    </source>
</evidence>
<evidence type="ECO:0000305" key="3"/>
<name>IF1AY_HUMAN</name>
<feature type="chain" id="PRO_0000145102" description="Eukaryotic translation initiation factor 1A, Y-chromosomal">
    <location>
        <begin position="1"/>
        <end position="144"/>
    </location>
</feature>
<feature type="domain" description="S1-like">
    <location>
        <begin position="22"/>
        <end position="96"/>
    </location>
</feature>
<feature type="region of interest" description="Disordered" evidence="2">
    <location>
        <begin position="1"/>
        <end position="26"/>
    </location>
</feature>
<feature type="region of interest" description="Disordered" evidence="2">
    <location>
        <begin position="114"/>
        <end position="144"/>
    </location>
</feature>
<feature type="compositionally biased region" description="Basic residues" evidence="2">
    <location>
        <begin position="1"/>
        <end position="15"/>
    </location>
</feature>
<feature type="compositionally biased region" description="Basic and acidic residues" evidence="2">
    <location>
        <begin position="16"/>
        <end position="26"/>
    </location>
</feature>
<feature type="compositionally biased region" description="Acidic residues" evidence="2">
    <location>
        <begin position="124"/>
        <end position="144"/>
    </location>
</feature>
<feature type="cross-link" description="Glycyl lysine isopeptide (Lys-Gly) (interchain with G-Cter in ubiquitin)">
    <location>
        <position position="88"/>
    </location>
</feature>
<feature type="sequence conflict" description="In Ref. 1; AAC51834." evidence="3" ref="1">
    <original>E</original>
    <variation>G</variation>
    <location>
        <position position="108"/>
    </location>
</feature>
<gene>
    <name type="primary">EIF1AY</name>
</gene>
<organism>
    <name type="scientific">Homo sapiens</name>
    <name type="common">Human</name>
    <dbReference type="NCBI Taxonomy" id="9606"/>
    <lineage>
        <taxon>Eukaryota</taxon>
        <taxon>Metazoa</taxon>
        <taxon>Chordata</taxon>
        <taxon>Craniata</taxon>
        <taxon>Vertebrata</taxon>
        <taxon>Euteleostomi</taxon>
        <taxon>Mammalia</taxon>
        <taxon>Eutheria</taxon>
        <taxon>Euarchontoglires</taxon>
        <taxon>Primates</taxon>
        <taxon>Haplorrhini</taxon>
        <taxon>Catarrhini</taxon>
        <taxon>Hominidae</taxon>
        <taxon>Homo</taxon>
    </lineage>
</organism>
<keyword id="KW-0963">Cytoplasm</keyword>
<keyword id="KW-0396">Initiation factor</keyword>
<keyword id="KW-1017">Isopeptide bond</keyword>
<keyword id="KW-0648">Protein biosynthesis</keyword>
<keyword id="KW-1185">Reference proteome</keyword>
<keyword id="KW-0694">RNA-binding</keyword>
<keyword id="KW-0820">tRNA-binding</keyword>
<keyword id="KW-0832">Ubl conjugation</keyword>
<dbReference type="EMBL" id="AF000987">
    <property type="protein sequence ID" value="AAC51834.1"/>
    <property type="molecule type" value="mRNA"/>
</dbReference>
<dbReference type="EMBL" id="BT007201">
    <property type="protein sequence ID" value="AAP35865.1"/>
    <property type="molecule type" value="mRNA"/>
</dbReference>
<dbReference type="EMBL" id="BC005248">
    <property type="protein sequence ID" value="AAH05248.1"/>
    <property type="molecule type" value="mRNA"/>
</dbReference>
<dbReference type="CCDS" id="CCDS14795.1"/>
<dbReference type="PIR" id="C53045">
    <property type="entry name" value="C53045"/>
</dbReference>
<dbReference type="RefSeq" id="NP_001265541.1">
    <property type="nucleotide sequence ID" value="NM_001278612.1"/>
</dbReference>
<dbReference type="RefSeq" id="NP_004672.2">
    <property type="nucleotide sequence ID" value="NM_004681.3"/>
</dbReference>
<dbReference type="BMRB" id="O14602"/>
<dbReference type="SMR" id="O14602"/>
<dbReference type="BioGRID" id="114542">
    <property type="interactions" value="29"/>
</dbReference>
<dbReference type="FunCoup" id="O14602">
    <property type="interactions" value="1222"/>
</dbReference>
<dbReference type="IntAct" id="O14602">
    <property type="interactions" value="17"/>
</dbReference>
<dbReference type="MINT" id="O14602"/>
<dbReference type="STRING" id="9606.ENSP00000354722"/>
<dbReference type="GlyGen" id="O14602">
    <property type="glycosylation" value="1 site, 1 O-linked glycan (1 site)"/>
</dbReference>
<dbReference type="iPTMnet" id="O14602"/>
<dbReference type="PhosphoSitePlus" id="O14602"/>
<dbReference type="SwissPalm" id="O14602"/>
<dbReference type="BioMuta" id="EIF1AY"/>
<dbReference type="jPOST" id="O14602"/>
<dbReference type="MassIVE" id="O14602"/>
<dbReference type="PeptideAtlas" id="O14602"/>
<dbReference type="ProteomicsDB" id="48107"/>
<dbReference type="Pumba" id="O14602"/>
<dbReference type="TopDownProteomics" id="O14602"/>
<dbReference type="Antibodypedia" id="21880">
    <property type="antibodies" value="226 antibodies from 24 providers"/>
</dbReference>
<dbReference type="DNASU" id="9086"/>
<dbReference type="Ensembl" id="ENST00000361365.7">
    <property type="protein sequence ID" value="ENSP00000354722.2"/>
    <property type="gene ID" value="ENSG00000198692.10"/>
</dbReference>
<dbReference type="GeneID" id="9086"/>
<dbReference type="KEGG" id="hsa:9086"/>
<dbReference type="MANE-Select" id="ENST00000361365.7">
    <property type="protein sequence ID" value="ENSP00000354722.2"/>
    <property type="RefSeq nucleotide sequence ID" value="NM_004681.4"/>
    <property type="RefSeq protein sequence ID" value="NP_004672.2"/>
</dbReference>
<dbReference type="UCSC" id="uc004fuk.5">
    <property type="organism name" value="human"/>
</dbReference>
<dbReference type="AGR" id="HGNC:3252"/>
<dbReference type="CTD" id="9086"/>
<dbReference type="DisGeNET" id="9086"/>
<dbReference type="GeneCards" id="EIF1AY"/>
<dbReference type="HGNC" id="HGNC:3252">
    <property type="gene designation" value="EIF1AY"/>
</dbReference>
<dbReference type="HPA" id="ENSG00000198692">
    <property type="expression patterns" value="Tissue enhanced (heart muscle, tongue)"/>
</dbReference>
<dbReference type="MIM" id="400014">
    <property type="type" value="gene"/>
</dbReference>
<dbReference type="neXtProt" id="NX_O14602"/>
<dbReference type="OpenTargets" id="ENSG00000198692"/>
<dbReference type="PharmGKB" id="PA27686"/>
<dbReference type="VEuPathDB" id="HostDB:ENSG00000198692"/>
<dbReference type="GeneTree" id="ENSGT00390000008256"/>
<dbReference type="HOGENOM" id="CLU_109098_0_1_1"/>
<dbReference type="InParanoid" id="O14602"/>
<dbReference type="OMA" id="RRVMMHA"/>
<dbReference type="OrthoDB" id="15498at9604"/>
<dbReference type="PAN-GO" id="O14602">
    <property type="GO annotations" value="3 GO annotations based on evolutionary models"/>
</dbReference>
<dbReference type="PhylomeDB" id="O14602"/>
<dbReference type="TreeFam" id="TF350394"/>
<dbReference type="PathwayCommons" id="O14602"/>
<dbReference type="SignaLink" id="O14602"/>
<dbReference type="SIGNOR" id="O14602"/>
<dbReference type="BioGRID-ORCS" id="9086">
    <property type="hits" value="116 hits in 732 CRISPR screens"/>
</dbReference>
<dbReference type="CD-CODE" id="91857CE7">
    <property type="entry name" value="Nucleolus"/>
</dbReference>
<dbReference type="ChiTaRS" id="EIF1AY">
    <property type="organism name" value="human"/>
</dbReference>
<dbReference type="GeneWiki" id="EIF1AY"/>
<dbReference type="GenomeRNAi" id="9086"/>
<dbReference type="Pharos" id="O14602">
    <property type="development level" value="Tdark"/>
</dbReference>
<dbReference type="PRO" id="PR:O14602"/>
<dbReference type="Proteomes" id="UP000005640">
    <property type="component" value="Chromosome Y"/>
</dbReference>
<dbReference type="RNAct" id="O14602">
    <property type="molecule type" value="protein"/>
</dbReference>
<dbReference type="Bgee" id="ENSG00000198692">
    <property type="expression patterns" value="Expressed in trabecular bone tissue and 181 other cell types or tissues"/>
</dbReference>
<dbReference type="ExpressionAtlas" id="O14602">
    <property type="expression patterns" value="baseline and differential"/>
</dbReference>
<dbReference type="GO" id="GO:0005737">
    <property type="term" value="C:cytoplasm"/>
    <property type="evidence" value="ECO:0000318"/>
    <property type="project" value="GO_Central"/>
</dbReference>
<dbReference type="GO" id="GO:0003743">
    <property type="term" value="F:translation initiation factor activity"/>
    <property type="evidence" value="ECO:0000318"/>
    <property type="project" value="GO_Central"/>
</dbReference>
<dbReference type="GO" id="GO:0000049">
    <property type="term" value="F:tRNA binding"/>
    <property type="evidence" value="ECO:0007669"/>
    <property type="project" value="UniProtKB-KW"/>
</dbReference>
<dbReference type="GO" id="GO:0006413">
    <property type="term" value="P:translational initiation"/>
    <property type="evidence" value="ECO:0000318"/>
    <property type="project" value="GO_Central"/>
</dbReference>
<dbReference type="CDD" id="cd05793">
    <property type="entry name" value="S1_IF1A"/>
    <property type="match status" value="1"/>
</dbReference>
<dbReference type="FunFam" id="2.40.50.140:FF:000071">
    <property type="entry name" value="Eukaryotic translation initiation factor 1A"/>
    <property type="match status" value="1"/>
</dbReference>
<dbReference type="Gene3D" id="2.40.50.140">
    <property type="entry name" value="Nucleic acid-binding proteins"/>
    <property type="match status" value="1"/>
</dbReference>
<dbReference type="HAMAP" id="MF_00216">
    <property type="entry name" value="aIF_1A"/>
    <property type="match status" value="1"/>
</dbReference>
<dbReference type="InterPro" id="IPR012340">
    <property type="entry name" value="NA-bd_OB-fold"/>
</dbReference>
<dbReference type="InterPro" id="IPR006196">
    <property type="entry name" value="RNA-binding_domain_S1_IF1"/>
</dbReference>
<dbReference type="InterPro" id="IPR001253">
    <property type="entry name" value="TIF_eIF-1A"/>
</dbReference>
<dbReference type="InterPro" id="IPR018104">
    <property type="entry name" value="TIF_eIF-1A_CS"/>
</dbReference>
<dbReference type="NCBIfam" id="TIGR00523">
    <property type="entry name" value="eIF-1A"/>
    <property type="match status" value="1"/>
</dbReference>
<dbReference type="PANTHER" id="PTHR21668">
    <property type="entry name" value="EIF-1A"/>
    <property type="match status" value="1"/>
</dbReference>
<dbReference type="Pfam" id="PF01176">
    <property type="entry name" value="eIF-1a"/>
    <property type="match status" value="1"/>
</dbReference>
<dbReference type="SMART" id="SM00652">
    <property type="entry name" value="eIF1a"/>
    <property type="match status" value="1"/>
</dbReference>
<dbReference type="SUPFAM" id="SSF50249">
    <property type="entry name" value="Nucleic acid-binding proteins"/>
    <property type="match status" value="1"/>
</dbReference>
<dbReference type="PROSITE" id="PS01262">
    <property type="entry name" value="IF1A"/>
    <property type="match status" value="1"/>
</dbReference>
<dbReference type="PROSITE" id="PS50832">
    <property type="entry name" value="S1_IF1_TYPE"/>
    <property type="match status" value="1"/>
</dbReference>
<reference key="1">
    <citation type="journal article" date="1997" name="Science">
        <title>Functional coherence of the human Y chromosome.</title>
        <authorList>
            <person name="Lahn B.T."/>
            <person name="Page D.C."/>
        </authorList>
    </citation>
    <scope>NUCLEOTIDE SEQUENCE [MRNA]</scope>
</reference>
<reference key="2">
    <citation type="submission" date="2004-10" db="EMBL/GenBank/DDBJ databases">
        <title>Cloning of human full-length CDSs in BD Creator(TM) system donor vector.</title>
        <authorList>
            <person name="Kalnine N."/>
            <person name="Chen X."/>
            <person name="Rolfs A."/>
            <person name="Halleck A."/>
            <person name="Hines L."/>
            <person name="Eisenstein S."/>
            <person name="Koundinya M."/>
            <person name="Raphael J."/>
            <person name="Moreira D."/>
            <person name="Kelley T."/>
            <person name="LaBaer J."/>
            <person name="Lin Y."/>
            <person name="Phelan M."/>
            <person name="Farmer A."/>
        </authorList>
    </citation>
    <scope>NUCLEOTIDE SEQUENCE [LARGE SCALE MRNA]</scope>
</reference>
<reference key="3">
    <citation type="journal article" date="2004" name="Genome Res.">
        <title>The status, quality, and expansion of the NIH full-length cDNA project: the Mammalian Gene Collection (MGC).</title>
        <authorList>
            <consortium name="The MGC Project Team"/>
        </authorList>
    </citation>
    <scope>NUCLEOTIDE SEQUENCE [LARGE SCALE MRNA]</scope>
    <source>
        <tissue>Heart</tissue>
    </source>
</reference>
<accession>O14602</accession>
<accession>Q9BS77</accession>
<sequence>MPKNKGKGGKNRRRGKNENESEKRELVFKEDGQEYAQVIKMLGNGRLEALCFDGVKRLCHIRGKLRKKVWINTSDIILVGLRDYQDNKADVILKYNADEARSLKAYGELPEHAKINETDTFGPGDDDEIQFDDIGDDDEDIDDI</sequence>
<proteinExistence type="evidence at protein level"/>
<comment type="function">
    <text evidence="1">Component of the 43S pre-initiation complex (43S PIC), which binds to the mRNA cap-proximal region, scans mRNA 5'-untranslated region, and locates the initiation codon. This protein enhances formation of the cap-proximal complex. Together with EIF1, facilitates scanning, start codon recognition, promotion of the assembly of 48S complex at the initiation codon (43S PIC becomes 48S PIC after the start codon is reached), and dissociation of aberrant complexes. After start codon location, together with EIF5B orients the initiator methionine-tRNA in a conformation that allows 60S ribosomal subunit joining to form the 80S initiation complex. Is released after 80S initiation complex formation, just after GTP hydrolysis by EIF5B, and before release of EIF5B. Its globular part is located in the A site of the 40S ribosomal subunit. Its interaction with EIF5 during scanning contribute to the maintenance of EIF1 within the open 43S PIC. In contrast to yeast orthologs, does not bind EIF1.</text>
</comment>
<comment type="subunit">
    <text evidence="1">Component of the 43S pre-initiation complex (43S PIC), which is composed of the 40S ribosomal subunit, EIF1, eIF1A (EIF1AX), eIF3 complex, EIF5 and eIF2-GTP-initiator tRNA complex (eIF2 ternary complex). Interacts with EIF5; this interaction contributes to the maintenance of EIF1 within the open 43S PIC. Interacts through its C-terminal domain (CTD) with the CTD of EIF5B; from the location of the start codon by the 43S complex until the formation of the 80S complex.</text>
</comment>
<comment type="interaction">
    <interactant intactId="EBI-286439">
        <id>O14602</id>
    </interactant>
    <interactant intactId="EBI-930964">
        <id>P54253</id>
        <label>ATXN1</label>
    </interactant>
    <organismsDiffer>false</organismsDiffer>
    <experiments>7</experiments>
</comment>
<comment type="interaction">
    <interactant intactId="EBI-286439">
        <id>O14602</id>
    </interactant>
    <interactant intactId="EBI-928530">
        <id>O60841</id>
        <label>EIF5B</label>
    </interactant>
    <organismsDiffer>false</organismsDiffer>
    <experiments>2</experiments>
</comment>
<comment type="interaction">
    <interactant intactId="EBI-286439">
        <id>O14602</id>
    </interactant>
    <interactant intactId="EBI-12690684">
        <id>P41235-3</id>
        <label>HNF4A</label>
    </interactant>
    <organismsDiffer>false</organismsDiffer>
    <experiments>3</experiments>
</comment>
<comment type="interaction">
    <interactant intactId="EBI-286439">
        <id>O14602</id>
    </interactant>
    <interactant intactId="EBI-466029">
        <id>P42858</id>
        <label>HTT</label>
    </interactant>
    <organismsDiffer>false</organismsDiffer>
    <experiments>6</experiments>
</comment>
<comment type="subcellular location">
    <subcellularLocation>
        <location evidence="3">Cytoplasm</location>
    </subcellularLocation>
</comment>
<comment type="tissue specificity">
    <text>Ubiquitous.</text>
</comment>
<comment type="similarity">
    <text evidence="3">Belongs to the eIF-1A family.</text>
</comment>